<name>APAH_PSEPK</name>
<gene>
    <name evidence="1" type="primary">apaH</name>
    <name type="ordered locus">PP_0399</name>
</gene>
<keyword id="KW-0378">Hydrolase</keyword>
<keyword id="KW-1185">Reference proteome</keyword>
<proteinExistence type="inferred from homology"/>
<accession>Q88QT8</accession>
<feature type="chain" id="PRO_0000198005" description="Bis(5'-nucleosyl)-tetraphosphatase, symmetrical">
    <location>
        <begin position="1"/>
        <end position="288"/>
    </location>
</feature>
<organism>
    <name type="scientific">Pseudomonas putida (strain ATCC 47054 / DSM 6125 / CFBP 8728 / NCIMB 11950 / KT2440)</name>
    <dbReference type="NCBI Taxonomy" id="160488"/>
    <lineage>
        <taxon>Bacteria</taxon>
        <taxon>Pseudomonadati</taxon>
        <taxon>Pseudomonadota</taxon>
        <taxon>Gammaproteobacteria</taxon>
        <taxon>Pseudomonadales</taxon>
        <taxon>Pseudomonadaceae</taxon>
        <taxon>Pseudomonas</taxon>
    </lineage>
</organism>
<sequence>MATYAVGDLQGCLQPLKCLLDRVSFNPAVDRLWLVGDLVNRGPESLETLRFLYSIRHSLVCVLGNHDLHLLAAWHNVERLKKSDTLREIIEAPDADQLFDWLRQQKLLHYDEPRGIALVHAGIPPQWTLGKALELAAEVEEVLRDDTRLQLYLDGMYGNEPNKWSKNLAGVERLRVITNYFTRMRFCTADGKLDLKSKEGLGSAPKGYKAWYAHKDRRSRHVKIIFGHWAALQGEVTEPDVIALDTGCVWGGAMTLYNVDSGEYHRCDCADDGTLRQPAQPTTLNDHT</sequence>
<comment type="function">
    <text evidence="1">Hydrolyzes diadenosine 5',5'''-P1,P4-tetraphosphate to yield ADP.</text>
</comment>
<comment type="catalytic activity">
    <reaction evidence="1">
        <text>P(1),P(4)-bis(5'-adenosyl) tetraphosphate + H2O = 2 ADP + 2 H(+)</text>
        <dbReference type="Rhea" id="RHEA:24252"/>
        <dbReference type="ChEBI" id="CHEBI:15377"/>
        <dbReference type="ChEBI" id="CHEBI:15378"/>
        <dbReference type="ChEBI" id="CHEBI:58141"/>
        <dbReference type="ChEBI" id="CHEBI:456216"/>
        <dbReference type="EC" id="3.6.1.41"/>
    </reaction>
</comment>
<comment type="similarity">
    <text evidence="1">Belongs to the Ap4A hydrolase family.</text>
</comment>
<protein>
    <recommendedName>
        <fullName evidence="1">Bis(5'-nucleosyl)-tetraphosphatase, symmetrical</fullName>
        <ecNumber evidence="1">3.6.1.41</ecNumber>
    </recommendedName>
    <alternativeName>
        <fullName evidence="1">Ap4A hydrolase</fullName>
    </alternativeName>
    <alternativeName>
        <fullName evidence="1">Diadenosine 5',5'''-P1,P4-tetraphosphate pyrophosphohydrolase</fullName>
    </alternativeName>
    <alternativeName>
        <fullName evidence="1">Diadenosine tetraphosphatase</fullName>
    </alternativeName>
</protein>
<evidence type="ECO:0000255" key="1">
    <source>
        <dbReference type="HAMAP-Rule" id="MF_00199"/>
    </source>
</evidence>
<reference key="1">
    <citation type="journal article" date="2002" name="Environ. Microbiol.">
        <title>Complete genome sequence and comparative analysis of the metabolically versatile Pseudomonas putida KT2440.</title>
        <authorList>
            <person name="Nelson K.E."/>
            <person name="Weinel C."/>
            <person name="Paulsen I.T."/>
            <person name="Dodson R.J."/>
            <person name="Hilbert H."/>
            <person name="Martins dos Santos V.A.P."/>
            <person name="Fouts D.E."/>
            <person name="Gill S.R."/>
            <person name="Pop M."/>
            <person name="Holmes M."/>
            <person name="Brinkac L.M."/>
            <person name="Beanan M.J."/>
            <person name="DeBoy R.T."/>
            <person name="Daugherty S.C."/>
            <person name="Kolonay J.F."/>
            <person name="Madupu R."/>
            <person name="Nelson W.C."/>
            <person name="White O."/>
            <person name="Peterson J.D."/>
            <person name="Khouri H.M."/>
            <person name="Hance I."/>
            <person name="Chris Lee P."/>
            <person name="Holtzapple E.K."/>
            <person name="Scanlan D."/>
            <person name="Tran K."/>
            <person name="Moazzez A."/>
            <person name="Utterback T.R."/>
            <person name="Rizzo M."/>
            <person name="Lee K."/>
            <person name="Kosack D."/>
            <person name="Moestl D."/>
            <person name="Wedler H."/>
            <person name="Lauber J."/>
            <person name="Stjepandic D."/>
            <person name="Hoheisel J."/>
            <person name="Straetz M."/>
            <person name="Heim S."/>
            <person name="Kiewitz C."/>
            <person name="Eisen J.A."/>
            <person name="Timmis K.N."/>
            <person name="Duesterhoeft A."/>
            <person name="Tuemmler B."/>
            <person name="Fraser C.M."/>
        </authorList>
    </citation>
    <scope>NUCLEOTIDE SEQUENCE [LARGE SCALE GENOMIC DNA]</scope>
    <source>
        <strain>ATCC 47054 / DSM 6125 / CFBP 8728 / NCIMB 11950 / KT2440</strain>
    </source>
</reference>
<dbReference type="EC" id="3.6.1.41" evidence="1"/>
<dbReference type="EMBL" id="AE015451">
    <property type="protein sequence ID" value="AAN66030.1"/>
    <property type="molecule type" value="Genomic_DNA"/>
</dbReference>
<dbReference type="RefSeq" id="NP_742566.1">
    <property type="nucleotide sequence ID" value="NC_002947.4"/>
</dbReference>
<dbReference type="RefSeq" id="WP_004576191.1">
    <property type="nucleotide sequence ID" value="NZ_CP169744.1"/>
</dbReference>
<dbReference type="SMR" id="Q88QT8"/>
<dbReference type="STRING" id="160488.PP_0399"/>
<dbReference type="PaxDb" id="160488-PP_0399"/>
<dbReference type="KEGG" id="ppu:PP_0399"/>
<dbReference type="PATRIC" id="fig|160488.4.peg.429"/>
<dbReference type="eggNOG" id="COG0639">
    <property type="taxonomic scope" value="Bacteria"/>
</dbReference>
<dbReference type="HOGENOM" id="CLU_056184_2_0_6"/>
<dbReference type="OrthoDB" id="9807890at2"/>
<dbReference type="PhylomeDB" id="Q88QT8"/>
<dbReference type="BioCyc" id="PPUT160488:G1G01-436-MONOMER"/>
<dbReference type="Proteomes" id="UP000000556">
    <property type="component" value="Chromosome"/>
</dbReference>
<dbReference type="GO" id="GO:0008803">
    <property type="term" value="F:bis(5'-nucleosyl)-tetraphosphatase (symmetrical) activity"/>
    <property type="evidence" value="ECO:0007669"/>
    <property type="project" value="UniProtKB-UniRule"/>
</dbReference>
<dbReference type="CDD" id="cd07422">
    <property type="entry name" value="MPP_ApaH"/>
    <property type="match status" value="1"/>
</dbReference>
<dbReference type="Gene3D" id="3.60.21.10">
    <property type="match status" value="1"/>
</dbReference>
<dbReference type="HAMAP" id="MF_00199">
    <property type="entry name" value="ApaH"/>
    <property type="match status" value="1"/>
</dbReference>
<dbReference type="InterPro" id="IPR004617">
    <property type="entry name" value="ApaH"/>
</dbReference>
<dbReference type="InterPro" id="IPR004843">
    <property type="entry name" value="Calcineurin-like_PHP_ApaH"/>
</dbReference>
<dbReference type="InterPro" id="IPR029052">
    <property type="entry name" value="Metallo-depent_PP-like"/>
</dbReference>
<dbReference type="NCBIfam" id="TIGR00668">
    <property type="entry name" value="apaH"/>
    <property type="match status" value="1"/>
</dbReference>
<dbReference type="NCBIfam" id="NF001204">
    <property type="entry name" value="PRK00166.1"/>
    <property type="match status" value="1"/>
</dbReference>
<dbReference type="PANTHER" id="PTHR40942">
    <property type="match status" value="1"/>
</dbReference>
<dbReference type="PANTHER" id="PTHR40942:SF4">
    <property type="entry name" value="CYTOCHROME C5"/>
    <property type="match status" value="1"/>
</dbReference>
<dbReference type="Pfam" id="PF00149">
    <property type="entry name" value="Metallophos"/>
    <property type="match status" value="1"/>
</dbReference>
<dbReference type="PIRSF" id="PIRSF000903">
    <property type="entry name" value="B5n-ttraPtase_sm"/>
    <property type="match status" value="1"/>
</dbReference>
<dbReference type="SUPFAM" id="SSF56300">
    <property type="entry name" value="Metallo-dependent phosphatases"/>
    <property type="match status" value="1"/>
</dbReference>